<organism>
    <name type="scientific">Methanosarcina acetivorans (strain ATCC 35395 / DSM 2834 / JCM 12185 / C2A)</name>
    <dbReference type="NCBI Taxonomy" id="188937"/>
    <lineage>
        <taxon>Archaea</taxon>
        <taxon>Methanobacteriati</taxon>
        <taxon>Methanobacteriota</taxon>
        <taxon>Stenosarchaea group</taxon>
        <taxon>Methanomicrobia</taxon>
        <taxon>Methanosarcinales</taxon>
        <taxon>Methanosarcinaceae</taxon>
        <taxon>Methanosarcina</taxon>
    </lineage>
</organism>
<name>FLUC1_METAC</name>
<gene>
    <name evidence="1" type="primary">fluC1</name>
    <name evidence="1" type="synonym">crcB1</name>
    <name type="ordered locus">MA_3934</name>
</gene>
<protein>
    <recommendedName>
        <fullName evidence="1">Fluoride-specific ion channel FluC 1</fullName>
    </recommendedName>
</protein>
<accession>Q8TJ54</accession>
<dbReference type="EMBL" id="AE010299">
    <property type="protein sequence ID" value="AAM07285.1"/>
    <property type="molecule type" value="Genomic_DNA"/>
</dbReference>
<dbReference type="RefSeq" id="WP_011023830.1">
    <property type="nucleotide sequence ID" value="NC_003552.1"/>
</dbReference>
<dbReference type="SMR" id="Q8TJ54"/>
<dbReference type="FunCoup" id="Q8TJ54">
    <property type="interactions" value="2"/>
</dbReference>
<dbReference type="STRING" id="188937.MA_3934"/>
<dbReference type="EnsemblBacteria" id="AAM07285">
    <property type="protein sequence ID" value="AAM07285"/>
    <property type="gene ID" value="MA_3934"/>
</dbReference>
<dbReference type="GeneID" id="1475827"/>
<dbReference type="KEGG" id="mac:MA_3934"/>
<dbReference type="HOGENOM" id="CLU_114342_2_3_2"/>
<dbReference type="InParanoid" id="Q8TJ54"/>
<dbReference type="OrthoDB" id="253428at2157"/>
<dbReference type="PhylomeDB" id="Q8TJ54"/>
<dbReference type="Proteomes" id="UP000002487">
    <property type="component" value="Chromosome"/>
</dbReference>
<dbReference type="GO" id="GO:0005886">
    <property type="term" value="C:plasma membrane"/>
    <property type="evidence" value="ECO:0000318"/>
    <property type="project" value="GO_Central"/>
</dbReference>
<dbReference type="GO" id="GO:0062054">
    <property type="term" value="F:fluoride channel activity"/>
    <property type="evidence" value="ECO:0007669"/>
    <property type="project" value="UniProtKB-UniRule"/>
</dbReference>
<dbReference type="GO" id="GO:1903425">
    <property type="term" value="F:fluoride transmembrane transporter activity"/>
    <property type="evidence" value="ECO:0000318"/>
    <property type="project" value="GO_Central"/>
</dbReference>
<dbReference type="GO" id="GO:0046872">
    <property type="term" value="F:metal ion binding"/>
    <property type="evidence" value="ECO:0007669"/>
    <property type="project" value="UniProtKB-KW"/>
</dbReference>
<dbReference type="GO" id="GO:0140114">
    <property type="term" value="P:cellular detoxification of fluoride"/>
    <property type="evidence" value="ECO:0007669"/>
    <property type="project" value="UniProtKB-UniRule"/>
</dbReference>
<dbReference type="GO" id="GO:1903424">
    <property type="term" value="P:fluoride transmembrane transport"/>
    <property type="evidence" value="ECO:0000318"/>
    <property type="project" value="GO_Central"/>
</dbReference>
<dbReference type="HAMAP" id="MF_00454">
    <property type="entry name" value="FluC"/>
    <property type="match status" value="1"/>
</dbReference>
<dbReference type="InterPro" id="IPR003691">
    <property type="entry name" value="FluC"/>
</dbReference>
<dbReference type="NCBIfam" id="TIGR00494">
    <property type="entry name" value="crcB"/>
    <property type="match status" value="1"/>
</dbReference>
<dbReference type="PANTHER" id="PTHR28259">
    <property type="entry name" value="FLUORIDE EXPORT PROTEIN 1-RELATED"/>
    <property type="match status" value="1"/>
</dbReference>
<dbReference type="PANTHER" id="PTHR28259:SF1">
    <property type="entry name" value="FLUORIDE EXPORT PROTEIN 1-RELATED"/>
    <property type="match status" value="1"/>
</dbReference>
<dbReference type="Pfam" id="PF02537">
    <property type="entry name" value="CRCB"/>
    <property type="match status" value="1"/>
</dbReference>
<proteinExistence type="inferred from homology"/>
<comment type="function">
    <text evidence="1">Fluoride-specific ion channel. Important for reducing fluoride concentration in the cell, thus reducing its toxicity.</text>
</comment>
<comment type="catalytic activity">
    <reaction evidence="1">
        <text>fluoride(in) = fluoride(out)</text>
        <dbReference type="Rhea" id="RHEA:76159"/>
        <dbReference type="ChEBI" id="CHEBI:17051"/>
    </reaction>
    <physiologicalReaction direction="left-to-right" evidence="1">
        <dbReference type="Rhea" id="RHEA:76160"/>
    </physiologicalReaction>
</comment>
<comment type="activity regulation">
    <text evidence="1">Na(+) is not transported, but it plays an essential structural role and its presence is essential for fluoride channel function.</text>
</comment>
<comment type="subcellular location">
    <subcellularLocation>
        <location evidence="1">Cell membrane</location>
        <topology evidence="1">Multi-pass membrane protein</topology>
    </subcellularLocation>
</comment>
<comment type="similarity">
    <text evidence="1">Belongs to the fluoride channel Fluc/FEX (TC 1.A.43) family.</text>
</comment>
<keyword id="KW-1003">Cell membrane</keyword>
<keyword id="KW-0407">Ion channel</keyword>
<keyword id="KW-0406">Ion transport</keyword>
<keyword id="KW-0472">Membrane</keyword>
<keyword id="KW-0479">Metal-binding</keyword>
<keyword id="KW-1185">Reference proteome</keyword>
<keyword id="KW-0915">Sodium</keyword>
<keyword id="KW-0812">Transmembrane</keyword>
<keyword id="KW-1133">Transmembrane helix</keyword>
<keyword id="KW-0813">Transport</keyword>
<reference key="1">
    <citation type="journal article" date="2002" name="Genome Res.">
        <title>The genome of Methanosarcina acetivorans reveals extensive metabolic and physiological diversity.</title>
        <authorList>
            <person name="Galagan J.E."/>
            <person name="Nusbaum C."/>
            <person name="Roy A."/>
            <person name="Endrizzi M.G."/>
            <person name="Macdonald P."/>
            <person name="FitzHugh W."/>
            <person name="Calvo S."/>
            <person name="Engels R."/>
            <person name="Smirnov S."/>
            <person name="Atnoor D."/>
            <person name="Brown A."/>
            <person name="Allen N."/>
            <person name="Naylor J."/>
            <person name="Stange-Thomann N."/>
            <person name="DeArellano K."/>
            <person name="Johnson R."/>
            <person name="Linton L."/>
            <person name="McEwan P."/>
            <person name="McKernan K."/>
            <person name="Talamas J."/>
            <person name="Tirrell A."/>
            <person name="Ye W."/>
            <person name="Zimmer A."/>
            <person name="Barber R.D."/>
            <person name="Cann I."/>
            <person name="Graham D.E."/>
            <person name="Grahame D.A."/>
            <person name="Guss A.M."/>
            <person name="Hedderich R."/>
            <person name="Ingram-Smith C."/>
            <person name="Kuettner H.C."/>
            <person name="Krzycki J.A."/>
            <person name="Leigh J.A."/>
            <person name="Li W."/>
            <person name="Liu J."/>
            <person name="Mukhopadhyay B."/>
            <person name="Reeve J.N."/>
            <person name="Smith K."/>
            <person name="Springer T.A."/>
            <person name="Umayam L.A."/>
            <person name="White O."/>
            <person name="White R.H."/>
            <person name="de Macario E.C."/>
            <person name="Ferry J.G."/>
            <person name="Jarrell K.F."/>
            <person name="Jing H."/>
            <person name="Macario A.J.L."/>
            <person name="Paulsen I.T."/>
            <person name="Pritchett M."/>
            <person name="Sowers K.R."/>
            <person name="Swanson R.V."/>
            <person name="Zinder S.H."/>
            <person name="Lander E."/>
            <person name="Metcalf W.W."/>
            <person name="Birren B."/>
        </authorList>
    </citation>
    <scope>NUCLEOTIDE SEQUENCE [LARGE SCALE GENOMIC DNA]</scope>
    <source>
        <strain>ATCC 35395 / DSM 2834 / JCM 12185 / C2A</strain>
    </source>
</reference>
<sequence>MYTILLIGIGGFIGAVLRYSLSGWVQNSFVNFPLGTLVVNIVGSFFLGLVMYLSEYQGLFSEETRILLTIGLLGAFTTLSTFSYESFRLLESSKLMQLTMNIVATVLFSIFAVYLGKISALNLAAYLRGIK</sequence>
<evidence type="ECO:0000255" key="1">
    <source>
        <dbReference type="HAMAP-Rule" id="MF_00454"/>
    </source>
</evidence>
<feature type="chain" id="PRO_0000110225" description="Fluoride-specific ion channel FluC 1">
    <location>
        <begin position="1"/>
        <end position="131"/>
    </location>
</feature>
<feature type="transmembrane region" description="Helical" evidence="1">
    <location>
        <begin position="4"/>
        <end position="24"/>
    </location>
</feature>
<feature type="transmembrane region" description="Helical" evidence="1">
    <location>
        <begin position="32"/>
        <end position="52"/>
    </location>
</feature>
<feature type="transmembrane region" description="Helical" evidence="1">
    <location>
        <begin position="66"/>
        <end position="86"/>
    </location>
</feature>
<feature type="transmembrane region" description="Helical" evidence="1">
    <location>
        <begin position="95"/>
        <end position="115"/>
    </location>
</feature>
<feature type="binding site" evidence="1">
    <location>
        <position position="74"/>
    </location>
    <ligand>
        <name>Na(+)</name>
        <dbReference type="ChEBI" id="CHEBI:29101"/>
        <note>structural</note>
    </ligand>
</feature>
<feature type="binding site" evidence="1">
    <location>
        <position position="77"/>
    </location>
    <ligand>
        <name>Na(+)</name>
        <dbReference type="ChEBI" id="CHEBI:29101"/>
        <note>structural</note>
    </ligand>
</feature>